<organism>
    <name type="scientific">Caulobacter sp. (strain K31)</name>
    <dbReference type="NCBI Taxonomy" id="366602"/>
    <lineage>
        <taxon>Bacteria</taxon>
        <taxon>Pseudomonadati</taxon>
        <taxon>Pseudomonadota</taxon>
        <taxon>Alphaproteobacteria</taxon>
        <taxon>Caulobacterales</taxon>
        <taxon>Caulobacteraceae</taxon>
        <taxon>Caulobacter</taxon>
    </lineage>
</organism>
<comment type="function">
    <text evidence="1">Catalyzes the attachment of tyrosine to tRNA(Tyr) in a two-step reaction: tyrosine is first activated by ATP to form Tyr-AMP and then transferred to the acceptor end of tRNA(Tyr).</text>
</comment>
<comment type="catalytic activity">
    <reaction evidence="1">
        <text>tRNA(Tyr) + L-tyrosine + ATP = L-tyrosyl-tRNA(Tyr) + AMP + diphosphate + H(+)</text>
        <dbReference type="Rhea" id="RHEA:10220"/>
        <dbReference type="Rhea" id="RHEA-COMP:9706"/>
        <dbReference type="Rhea" id="RHEA-COMP:9707"/>
        <dbReference type="ChEBI" id="CHEBI:15378"/>
        <dbReference type="ChEBI" id="CHEBI:30616"/>
        <dbReference type="ChEBI" id="CHEBI:33019"/>
        <dbReference type="ChEBI" id="CHEBI:58315"/>
        <dbReference type="ChEBI" id="CHEBI:78442"/>
        <dbReference type="ChEBI" id="CHEBI:78536"/>
        <dbReference type="ChEBI" id="CHEBI:456215"/>
        <dbReference type="EC" id="6.1.1.1"/>
    </reaction>
</comment>
<comment type="subunit">
    <text evidence="1">Homodimer.</text>
</comment>
<comment type="subcellular location">
    <subcellularLocation>
        <location evidence="1">Cytoplasm</location>
    </subcellularLocation>
</comment>
<comment type="similarity">
    <text evidence="1">Belongs to the class-I aminoacyl-tRNA synthetase family. TyrS type 1 subfamily.</text>
</comment>
<accession>B0SXC3</accession>
<feature type="chain" id="PRO_1000088581" description="Tyrosine--tRNA ligase">
    <location>
        <begin position="1"/>
        <end position="419"/>
    </location>
</feature>
<feature type="domain" description="S4 RNA-binding" evidence="1">
    <location>
        <begin position="353"/>
        <end position="418"/>
    </location>
</feature>
<feature type="short sequence motif" description="'HIGH' region">
    <location>
        <begin position="47"/>
        <end position="56"/>
    </location>
</feature>
<feature type="short sequence motif" description="'KMSKS' region">
    <location>
        <begin position="239"/>
        <end position="243"/>
    </location>
</feature>
<feature type="binding site" evidence="1">
    <location>
        <position position="42"/>
    </location>
    <ligand>
        <name>L-tyrosine</name>
        <dbReference type="ChEBI" id="CHEBI:58315"/>
    </ligand>
</feature>
<feature type="binding site" evidence="1">
    <location>
        <position position="179"/>
    </location>
    <ligand>
        <name>L-tyrosine</name>
        <dbReference type="ChEBI" id="CHEBI:58315"/>
    </ligand>
</feature>
<feature type="binding site" evidence="1">
    <location>
        <position position="183"/>
    </location>
    <ligand>
        <name>L-tyrosine</name>
        <dbReference type="ChEBI" id="CHEBI:58315"/>
    </ligand>
</feature>
<feature type="binding site" evidence="1">
    <location>
        <position position="242"/>
    </location>
    <ligand>
        <name>ATP</name>
        <dbReference type="ChEBI" id="CHEBI:30616"/>
    </ligand>
</feature>
<reference key="1">
    <citation type="submission" date="2008-01" db="EMBL/GenBank/DDBJ databases">
        <title>Complete sequence of chromosome of Caulobacter sp. K31.</title>
        <authorList>
            <consortium name="US DOE Joint Genome Institute"/>
            <person name="Copeland A."/>
            <person name="Lucas S."/>
            <person name="Lapidus A."/>
            <person name="Barry K."/>
            <person name="Glavina del Rio T."/>
            <person name="Dalin E."/>
            <person name="Tice H."/>
            <person name="Pitluck S."/>
            <person name="Bruce D."/>
            <person name="Goodwin L."/>
            <person name="Thompson L.S."/>
            <person name="Brettin T."/>
            <person name="Detter J.C."/>
            <person name="Han C."/>
            <person name="Schmutz J."/>
            <person name="Larimer F."/>
            <person name="Land M."/>
            <person name="Hauser L."/>
            <person name="Kyrpides N."/>
            <person name="Kim E."/>
            <person name="Stephens C."/>
            <person name="Richardson P."/>
        </authorList>
    </citation>
    <scope>NUCLEOTIDE SEQUENCE [LARGE SCALE GENOMIC DNA]</scope>
    <source>
        <strain>K31</strain>
    </source>
</reference>
<proteinExistence type="inferred from homology"/>
<evidence type="ECO:0000255" key="1">
    <source>
        <dbReference type="HAMAP-Rule" id="MF_02006"/>
    </source>
</evidence>
<dbReference type="EC" id="6.1.1.1" evidence="1"/>
<dbReference type="EMBL" id="CP000927">
    <property type="protein sequence ID" value="ABZ71708.1"/>
    <property type="molecule type" value="Genomic_DNA"/>
</dbReference>
<dbReference type="SMR" id="B0SXC3"/>
<dbReference type="STRING" id="366602.Caul_2581"/>
<dbReference type="KEGG" id="cak:Caul_2581"/>
<dbReference type="eggNOG" id="COG0162">
    <property type="taxonomic scope" value="Bacteria"/>
</dbReference>
<dbReference type="HOGENOM" id="CLU_024003_0_3_5"/>
<dbReference type="OrthoDB" id="9804243at2"/>
<dbReference type="GO" id="GO:0005829">
    <property type="term" value="C:cytosol"/>
    <property type="evidence" value="ECO:0007669"/>
    <property type="project" value="TreeGrafter"/>
</dbReference>
<dbReference type="GO" id="GO:0005524">
    <property type="term" value="F:ATP binding"/>
    <property type="evidence" value="ECO:0007669"/>
    <property type="project" value="UniProtKB-UniRule"/>
</dbReference>
<dbReference type="GO" id="GO:0003723">
    <property type="term" value="F:RNA binding"/>
    <property type="evidence" value="ECO:0007669"/>
    <property type="project" value="UniProtKB-KW"/>
</dbReference>
<dbReference type="GO" id="GO:0004831">
    <property type="term" value="F:tyrosine-tRNA ligase activity"/>
    <property type="evidence" value="ECO:0007669"/>
    <property type="project" value="UniProtKB-UniRule"/>
</dbReference>
<dbReference type="GO" id="GO:0006437">
    <property type="term" value="P:tyrosyl-tRNA aminoacylation"/>
    <property type="evidence" value="ECO:0007669"/>
    <property type="project" value="UniProtKB-UniRule"/>
</dbReference>
<dbReference type="CDD" id="cd00165">
    <property type="entry name" value="S4"/>
    <property type="match status" value="1"/>
</dbReference>
<dbReference type="CDD" id="cd00805">
    <property type="entry name" value="TyrRS_core"/>
    <property type="match status" value="1"/>
</dbReference>
<dbReference type="FunFam" id="1.10.240.10:FF:000001">
    <property type="entry name" value="Tyrosine--tRNA ligase"/>
    <property type="match status" value="1"/>
</dbReference>
<dbReference type="Gene3D" id="3.40.50.620">
    <property type="entry name" value="HUPs"/>
    <property type="match status" value="1"/>
</dbReference>
<dbReference type="Gene3D" id="3.10.290.10">
    <property type="entry name" value="RNA-binding S4 domain"/>
    <property type="match status" value="1"/>
</dbReference>
<dbReference type="Gene3D" id="1.10.240.10">
    <property type="entry name" value="Tyrosyl-Transfer RNA Synthetase"/>
    <property type="match status" value="1"/>
</dbReference>
<dbReference type="HAMAP" id="MF_02006">
    <property type="entry name" value="Tyr_tRNA_synth_type1"/>
    <property type="match status" value="1"/>
</dbReference>
<dbReference type="InterPro" id="IPR002305">
    <property type="entry name" value="aa-tRNA-synth_Ic"/>
</dbReference>
<dbReference type="InterPro" id="IPR014729">
    <property type="entry name" value="Rossmann-like_a/b/a_fold"/>
</dbReference>
<dbReference type="InterPro" id="IPR036986">
    <property type="entry name" value="S4_RNA-bd_sf"/>
</dbReference>
<dbReference type="InterPro" id="IPR054608">
    <property type="entry name" value="SYY-like_C"/>
</dbReference>
<dbReference type="InterPro" id="IPR002307">
    <property type="entry name" value="Tyr-tRNA-ligase"/>
</dbReference>
<dbReference type="InterPro" id="IPR024088">
    <property type="entry name" value="Tyr-tRNA-ligase_bac-type"/>
</dbReference>
<dbReference type="InterPro" id="IPR024107">
    <property type="entry name" value="Tyr-tRNA-ligase_bac_1"/>
</dbReference>
<dbReference type="NCBIfam" id="TIGR00234">
    <property type="entry name" value="tyrS"/>
    <property type="match status" value="1"/>
</dbReference>
<dbReference type="PANTHER" id="PTHR11766:SF0">
    <property type="entry name" value="TYROSINE--TRNA LIGASE, MITOCHONDRIAL"/>
    <property type="match status" value="1"/>
</dbReference>
<dbReference type="PANTHER" id="PTHR11766">
    <property type="entry name" value="TYROSYL-TRNA SYNTHETASE"/>
    <property type="match status" value="1"/>
</dbReference>
<dbReference type="Pfam" id="PF22421">
    <property type="entry name" value="SYY_C-terminal"/>
    <property type="match status" value="1"/>
</dbReference>
<dbReference type="Pfam" id="PF00579">
    <property type="entry name" value="tRNA-synt_1b"/>
    <property type="match status" value="1"/>
</dbReference>
<dbReference type="PRINTS" id="PR01040">
    <property type="entry name" value="TRNASYNTHTYR"/>
</dbReference>
<dbReference type="SUPFAM" id="SSF55174">
    <property type="entry name" value="Alpha-L RNA-binding motif"/>
    <property type="match status" value="1"/>
</dbReference>
<dbReference type="SUPFAM" id="SSF52374">
    <property type="entry name" value="Nucleotidylyl transferase"/>
    <property type="match status" value="1"/>
</dbReference>
<dbReference type="PROSITE" id="PS50889">
    <property type="entry name" value="S4"/>
    <property type="match status" value="1"/>
</dbReference>
<gene>
    <name evidence="1" type="primary">tyrS</name>
    <name type="ordered locus">Caul_2581</name>
</gene>
<sequence>MSAAASFKSEFLQTLQARGYIHQITHPDELDAAAAGGIVTAYIGFDATAPSLHVGSLIQIMMLRRLQQAGHKPIVLMGGGTTKVGDPTGKDESRKLLSDADIAANIAGIKQVFAKFLTFGDGPTDAIMVDNDVWLSKFGYVQFLRDYGVHFTVNRMLAFDSVKLRLEREQPMTFLEFNYMLMQAVDFLELNRAHGCVLQMGGSDQWGNILNGVELTRRVDHKAAFGLTTPLLATASGAKMGKTMSGAVWLNAEQLSPYDYWQFWRNTEDADVGRFLKLFTDLPLDEIARLEALPGAQINDAKKVLADEATRMAHGEDEARKARDAAEKAFEQGALSADLPTFEIAAAELKAGIVLANLFADAGLAASRGEARRLAQGGGVKVNDKAEPDANRVVTEADLVEGVVKLAAGKKKIVLVKPI</sequence>
<keyword id="KW-0030">Aminoacyl-tRNA synthetase</keyword>
<keyword id="KW-0067">ATP-binding</keyword>
<keyword id="KW-0963">Cytoplasm</keyword>
<keyword id="KW-0436">Ligase</keyword>
<keyword id="KW-0547">Nucleotide-binding</keyword>
<keyword id="KW-0648">Protein biosynthesis</keyword>
<keyword id="KW-0694">RNA-binding</keyword>
<protein>
    <recommendedName>
        <fullName evidence="1">Tyrosine--tRNA ligase</fullName>
        <ecNumber evidence="1">6.1.1.1</ecNumber>
    </recommendedName>
    <alternativeName>
        <fullName evidence="1">Tyrosyl-tRNA synthetase</fullName>
        <shortName evidence="1">TyrRS</shortName>
    </alternativeName>
</protein>
<name>SYY_CAUSK</name>